<organism>
    <name type="scientific">Cronobacter sakazakii (strain ATCC BAA-894)</name>
    <name type="common">Enterobacter sakazakii</name>
    <dbReference type="NCBI Taxonomy" id="290339"/>
    <lineage>
        <taxon>Bacteria</taxon>
        <taxon>Pseudomonadati</taxon>
        <taxon>Pseudomonadota</taxon>
        <taxon>Gammaproteobacteria</taxon>
        <taxon>Enterobacterales</taxon>
        <taxon>Enterobacteriaceae</taxon>
        <taxon>Cronobacter</taxon>
    </lineage>
</organism>
<reference key="1">
    <citation type="journal article" date="2010" name="PLoS ONE">
        <title>Genome sequence of Cronobacter sakazakii BAA-894 and comparative genomic hybridization analysis with other Cronobacter species.</title>
        <authorList>
            <person name="Kucerova E."/>
            <person name="Clifton S.W."/>
            <person name="Xia X.Q."/>
            <person name="Long F."/>
            <person name="Porwollik S."/>
            <person name="Fulton L."/>
            <person name="Fronick C."/>
            <person name="Minx P."/>
            <person name="Kyung K."/>
            <person name="Warren W."/>
            <person name="Fulton R."/>
            <person name="Feng D."/>
            <person name="Wollam A."/>
            <person name="Shah N."/>
            <person name="Bhonagiri V."/>
            <person name="Nash W.E."/>
            <person name="Hallsworth-Pepin K."/>
            <person name="Wilson R.K."/>
            <person name="McClelland M."/>
            <person name="Forsythe S.J."/>
        </authorList>
    </citation>
    <scope>NUCLEOTIDE SEQUENCE [LARGE SCALE GENOMIC DNA]</scope>
    <source>
        <strain>ATCC BAA-894</strain>
    </source>
</reference>
<name>PPNP_CROS8</name>
<dbReference type="EC" id="2.4.2.1" evidence="1"/>
<dbReference type="EC" id="2.4.2.2" evidence="1"/>
<dbReference type="EMBL" id="CP000783">
    <property type="protein sequence ID" value="ABU78139.1"/>
    <property type="molecule type" value="Genomic_DNA"/>
</dbReference>
<dbReference type="RefSeq" id="WP_004386838.1">
    <property type="nucleotide sequence ID" value="NC_009778.1"/>
</dbReference>
<dbReference type="SMR" id="A7MLW9"/>
<dbReference type="KEGG" id="esa:ESA_02910"/>
<dbReference type="HOGENOM" id="CLU_157874_0_0_6"/>
<dbReference type="Proteomes" id="UP000000260">
    <property type="component" value="Chromosome"/>
</dbReference>
<dbReference type="GO" id="GO:0005829">
    <property type="term" value="C:cytosol"/>
    <property type="evidence" value="ECO:0007669"/>
    <property type="project" value="TreeGrafter"/>
</dbReference>
<dbReference type="GO" id="GO:0047975">
    <property type="term" value="F:guanosine phosphorylase activity"/>
    <property type="evidence" value="ECO:0007669"/>
    <property type="project" value="UniProtKB-EC"/>
</dbReference>
<dbReference type="GO" id="GO:0004731">
    <property type="term" value="F:purine-nucleoside phosphorylase activity"/>
    <property type="evidence" value="ECO:0007669"/>
    <property type="project" value="UniProtKB-UniRule"/>
</dbReference>
<dbReference type="GO" id="GO:0009032">
    <property type="term" value="F:thymidine phosphorylase activity"/>
    <property type="evidence" value="ECO:0007669"/>
    <property type="project" value="UniProtKB-EC"/>
</dbReference>
<dbReference type="GO" id="GO:0004850">
    <property type="term" value="F:uridine phosphorylase activity"/>
    <property type="evidence" value="ECO:0007669"/>
    <property type="project" value="UniProtKB-EC"/>
</dbReference>
<dbReference type="CDD" id="cd20296">
    <property type="entry name" value="cupin_PpnP-like"/>
    <property type="match status" value="1"/>
</dbReference>
<dbReference type="FunFam" id="2.60.120.10:FF:000016">
    <property type="entry name" value="Pyrimidine/purine nucleoside phosphorylase"/>
    <property type="match status" value="1"/>
</dbReference>
<dbReference type="Gene3D" id="2.60.120.10">
    <property type="entry name" value="Jelly Rolls"/>
    <property type="match status" value="1"/>
</dbReference>
<dbReference type="HAMAP" id="MF_01537">
    <property type="entry name" value="Nucleos_phosphorylase_PpnP"/>
    <property type="match status" value="1"/>
</dbReference>
<dbReference type="InterPro" id="IPR009664">
    <property type="entry name" value="Ppnp"/>
</dbReference>
<dbReference type="InterPro" id="IPR014710">
    <property type="entry name" value="RmlC-like_jellyroll"/>
</dbReference>
<dbReference type="InterPro" id="IPR011051">
    <property type="entry name" value="RmlC_Cupin_sf"/>
</dbReference>
<dbReference type="NCBIfam" id="NF007875">
    <property type="entry name" value="PRK10579.1"/>
    <property type="match status" value="1"/>
</dbReference>
<dbReference type="PANTHER" id="PTHR36540">
    <property type="entry name" value="PYRIMIDINE/PURINE NUCLEOSIDE PHOSPHORYLASE"/>
    <property type="match status" value="1"/>
</dbReference>
<dbReference type="PANTHER" id="PTHR36540:SF1">
    <property type="entry name" value="PYRIMIDINE_PURINE NUCLEOSIDE PHOSPHORYLASE"/>
    <property type="match status" value="1"/>
</dbReference>
<dbReference type="Pfam" id="PF06865">
    <property type="entry name" value="Ppnp"/>
    <property type="match status" value="1"/>
</dbReference>
<dbReference type="SUPFAM" id="SSF51182">
    <property type="entry name" value="RmlC-like cupins"/>
    <property type="match status" value="1"/>
</dbReference>
<evidence type="ECO:0000255" key="1">
    <source>
        <dbReference type="HAMAP-Rule" id="MF_01537"/>
    </source>
</evidence>
<comment type="function">
    <text evidence="1">Catalyzes the phosphorolysis of diverse nucleosides, yielding D-ribose 1-phosphate and the respective free bases. Can use uridine, adenosine, guanosine, cytidine, thymidine, inosine and xanthosine as substrates. Also catalyzes the reverse reactions.</text>
</comment>
<comment type="catalytic activity">
    <reaction evidence="1">
        <text>a purine D-ribonucleoside + phosphate = a purine nucleobase + alpha-D-ribose 1-phosphate</text>
        <dbReference type="Rhea" id="RHEA:19805"/>
        <dbReference type="ChEBI" id="CHEBI:26386"/>
        <dbReference type="ChEBI" id="CHEBI:43474"/>
        <dbReference type="ChEBI" id="CHEBI:57720"/>
        <dbReference type="ChEBI" id="CHEBI:142355"/>
        <dbReference type="EC" id="2.4.2.1"/>
    </reaction>
</comment>
<comment type="catalytic activity">
    <reaction evidence="1">
        <text>adenosine + phosphate = alpha-D-ribose 1-phosphate + adenine</text>
        <dbReference type="Rhea" id="RHEA:27642"/>
        <dbReference type="ChEBI" id="CHEBI:16335"/>
        <dbReference type="ChEBI" id="CHEBI:16708"/>
        <dbReference type="ChEBI" id="CHEBI:43474"/>
        <dbReference type="ChEBI" id="CHEBI:57720"/>
        <dbReference type="EC" id="2.4.2.1"/>
    </reaction>
</comment>
<comment type="catalytic activity">
    <reaction evidence="1">
        <text>cytidine + phosphate = cytosine + alpha-D-ribose 1-phosphate</text>
        <dbReference type="Rhea" id="RHEA:52540"/>
        <dbReference type="ChEBI" id="CHEBI:16040"/>
        <dbReference type="ChEBI" id="CHEBI:17562"/>
        <dbReference type="ChEBI" id="CHEBI:43474"/>
        <dbReference type="ChEBI" id="CHEBI:57720"/>
        <dbReference type="EC" id="2.4.2.2"/>
    </reaction>
</comment>
<comment type="catalytic activity">
    <reaction evidence="1">
        <text>guanosine + phosphate = alpha-D-ribose 1-phosphate + guanine</text>
        <dbReference type="Rhea" id="RHEA:13233"/>
        <dbReference type="ChEBI" id="CHEBI:16235"/>
        <dbReference type="ChEBI" id="CHEBI:16750"/>
        <dbReference type="ChEBI" id="CHEBI:43474"/>
        <dbReference type="ChEBI" id="CHEBI:57720"/>
        <dbReference type="EC" id="2.4.2.1"/>
    </reaction>
</comment>
<comment type="catalytic activity">
    <reaction evidence="1">
        <text>inosine + phosphate = alpha-D-ribose 1-phosphate + hypoxanthine</text>
        <dbReference type="Rhea" id="RHEA:27646"/>
        <dbReference type="ChEBI" id="CHEBI:17368"/>
        <dbReference type="ChEBI" id="CHEBI:17596"/>
        <dbReference type="ChEBI" id="CHEBI:43474"/>
        <dbReference type="ChEBI" id="CHEBI:57720"/>
        <dbReference type="EC" id="2.4.2.1"/>
    </reaction>
</comment>
<comment type="catalytic activity">
    <reaction evidence="1">
        <text>thymidine + phosphate = 2-deoxy-alpha-D-ribose 1-phosphate + thymine</text>
        <dbReference type="Rhea" id="RHEA:16037"/>
        <dbReference type="ChEBI" id="CHEBI:17748"/>
        <dbReference type="ChEBI" id="CHEBI:17821"/>
        <dbReference type="ChEBI" id="CHEBI:43474"/>
        <dbReference type="ChEBI" id="CHEBI:57259"/>
        <dbReference type="EC" id="2.4.2.2"/>
    </reaction>
</comment>
<comment type="catalytic activity">
    <reaction evidence="1">
        <text>uridine + phosphate = alpha-D-ribose 1-phosphate + uracil</text>
        <dbReference type="Rhea" id="RHEA:24388"/>
        <dbReference type="ChEBI" id="CHEBI:16704"/>
        <dbReference type="ChEBI" id="CHEBI:17568"/>
        <dbReference type="ChEBI" id="CHEBI:43474"/>
        <dbReference type="ChEBI" id="CHEBI:57720"/>
        <dbReference type="EC" id="2.4.2.2"/>
    </reaction>
</comment>
<comment type="catalytic activity">
    <reaction evidence="1">
        <text>xanthosine + phosphate = alpha-D-ribose 1-phosphate + xanthine</text>
        <dbReference type="Rhea" id="RHEA:27638"/>
        <dbReference type="ChEBI" id="CHEBI:17712"/>
        <dbReference type="ChEBI" id="CHEBI:18107"/>
        <dbReference type="ChEBI" id="CHEBI:43474"/>
        <dbReference type="ChEBI" id="CHEBI:57720"/>
        <dbReference type="EC" id="2.4.2.1"/>
    </reaction>
</comment>
<comment type="similarity">
    <text evidence="1">Belongs to the nucleoside phosphorylase PpnP family.</text>
</comment>
<feature type="chain" id="PRO_1000068730" description="Pyrimidine/purine nucleoside phosphorylase">
    <location>
        <begin position="1"/>
        <end position="94"/>
    </location>
</feature>
<gene>
    <name evidence="1" type="primary">ppnP</name>
    <name type="ordered locus">ESA_02910</name>
</gene>
<accession>A7MLW9</accession>
<sequence length="94" mass="10309">MLQSNEYFSGKVKSIGFTSSSTGRASVGVMAEGEYTFSTAQPEEMTVVSGALHVLLPGETEWKTYEAGQVFHVPGHSEFHLQVAEPTSYLCRYL</sequence>
<proteinExistence type="inferred from homology"/>
<protein>
    <recommendedName>
        <fullName evidence="1">Pyrimidine/purine nucleoside phosphorylase</fullName>
        <ecNumber evidence="1">2.4.2.1</ecNumber>
        <ecNumber evidence="1">2.4.2.2</ecNumber>
    </recommendedName>
    <alternativeName>
        <fullName evidence="1">Adenosine phosphorylase</fullName>
    </alternativeName>
    <alternativeName>
        <fullName evidence="1">Cytidine phosphorylase</fullName>
    </alternativeName>
    <alternativeName>
        <fullName evidence="1">Guanosine phosphorylase</fullName>
    </alternativeName>
    <alternativeName>
        <fullName evidence="1">Inosine phosphorylase</fullName>
    </alternativeName>
    <alternativeName>
        <fullName evidence="1">Thymidine phosphorylase</fullName>
    </alternativeName>
    <alternativeName>
        <fullName evidence="1">Uridine phosphorylase</fullName>
    </alternativeName>
    <alternativeName>
        <fullName evidence="1">Xanthosine phosphorylase</fullName>
    </alternativeName>
</protein>
<keyword id="KW-0328">Glycosyltransferase</keyword>
<keyword id="KW-1185">Reference proteome</keyword>
<keyword id="KW-0808">Transferase</keyword>